<organism>
    <name type="scientific">Clostridium novyi (strain NT)</name>
    <dbReference type="NCBI Taxonomy" id="386415"/>
    <lineage>
        <taxon>Bacteria</taxon>
        <taxon>Bacillati</taxon>
        <taxon>Bacillota</taxon>
        <taxon>Clostridia</taxon>
        <taxon>Eubacteriales</taxon>
        <taxon>Clostridiaceae</taxon>
        <taxon>Clostridium</taxon>
    </lineage>
</organism>
<comment type="function">
    <text evidence="1">Involved in the biosynthesis of ADP-glucose, a building block required for the elongation reactions to produce glycogen. Catalyzes the reaction between ATP and alpha-D-glucose 1-phosphate (G1P) to produce pyrophosphate and ADP-Glc.</text>
</comment>
<comment type="catalytic activity">
    <reaction evidence="1">
        <text>alpha-D-glucose 1-phosphate + ATP + H(+) = ADP-alpha-D-glucose + diphosphate</text>
        <dbReference type="Rhea" id="RHEA:12120"/>
        <dbReference type="ChEBI" id="CHEBI:15378"/>
        <dbReference type="ChEBI" id="CHEBI:30616"/>
        <dbReference type="ChEBI" id="CHEBI:33019"/>
        <dbReference type="ChEBI" id="CHEBI:57498"/>
        <dbReference type="ChEBI" id="CHEBI:58601"/>
        <dbReference type="EC" id="2.7.7.27"/>
    </reaction>
</comment>
<comment type="pathway">
    <text evidence="1">Glycan biosynthesis; glycogen biosynthesis.</text>
</comment>
<comment type="subunit">
    <text evidence="1">Homotetramer.</text>
</comment>
<comment type="similarity">
    <text evidence="1">Belongs to the bacterial/plant glucose-1-phosphate adenylyltransferase family.</text>
</comment>
<evidence type="ECO:0000255" key="1">
    <source>
        <dbReference type="HAMAP-Rule" id="MF_00624"/>
    </source>
</evidence>
<gene>
    <name evidence="1" type="primary">glgC</name>
    <name type="ordered locus">NT01CX_0723</name>
</gene>
<proteinExistence type="inferred from homology"/>
<accession>A0Q3I7</accession>
<keyword id="KW-0067">ATP-binding</keyword>
<keyword id="KW-0119">Carbohydrate metabolism</keyword>
<keyword id="KW-0320">Glycogen biosynthesis</keyword>
<keyword id="KW-0321">Glycogen metabolism</keyword>
<keyword id="KW-0547">Nucleotide-binding</keyword>
<keyword id="KW-0548">Nucleotidyltransferase</keyword>
<keyword id="KW-1185">Reference proteome</keyword>
<keyword id="KW-0808">Transferase</keyword>
<sequence>MIKKEMLAMILAGGQGTRLKILTKNNAKPAVPFGGKYRIIDFTLSNCSNSGIDTIGVLTQYEPHILNSHIGIGSPWDLDRKRGGVSILPPHMRNDGGNWYMGTADAIYQNIMFIDKYDPEYILVLSGDHIYKMDYSKMLQFHKEKNSDATIAVIDVPIEEASRFGIMNTNDDDKIYEFEEKPEQPKNNKASMGIYIFNWKILKEFLIEDSELEDSDHDFGKNIIPSLLDSGYNLYAYSFNGYWKDVGTIESLWQANMDLLDTKNPLDIYNKNWKIYSVSPSKPPQYTGPNAIIQNSLVVEGCAVFGKIQNSVLFPEVEVGSNSIIQDSVIMSNVKIGQNVIIRKCIIGSNTIIENNSVIGNSDDITVIGDGEKIKTNSIIKN</sequence>
<reference key="1">
    <citation type="journal article" date="2006" name="Nat. Biotechnol.">
        <title>The genome and transcriptomes of the anti-tumor agent Clostridium novyi-NT.</title>
        <authorList>
            <person name="Bettegowda C."/>
            <person name="Huang X."/>
            <person name="Lin J."/>
            <person name="Cheong I."/>
            <person name="Kohli M."/>
            <person name="Szabo S.A."/>
            <person name="Zhang X."/>
            <person name="Diaz L.A. Jr."/>
            <person name="Velculescu V.E."/>
            <person name="Parmigiani G."/>
            <person name="Kinzler K.W."/>
            <person name="Vogelstein B."/>
            <person name="Zhou S."/>
        </authorList>
    </citation>
    <scope>NUCLEOTIDE SEQUENCE [LARGE SCALE GENOMIC DNA]</scope>
    <source>
        <strain>NT</strain>
    </source>
</reference>
<feature type="chain" id="PRO_1000051561" description="Glucose-1-phosphate adenylyltransferase">
    <location>
        <begin position="1"/>
        <end position="382"/>
    </location>
</feature>
<feature type="binding site" evidence="1">
    <location>
        <position position="100"/>
    </location>
    <ligand>
        <name>alpha-D-glucose 1-phosphate</name>
        <dbReference type="ChEBI" id="CHEBI:58601"/>
    </ligand>
</feature>
<feature type="binding site" evidence="1">
    <location>
        <position position="165"/>
    </location>
    <ligand>
        <name>alpha-D-glucose 1-phosphate</name>
        <dbReference type="ChEBI" id="CHEBI:58601"/>
    </ligand>
</feature>
<feature type="binding site" evidence="1">
    <location>
        <begin position="180"/>
        <end position="181"/>
    </location>
    <ligand>
        <name>alpha-D-glucose 1-phosphate</name>
        <dbReference type="ChEBI" id="CHEBI:58601"/>
    </ligand>
</feature>
<feature type="binding site" evidence="1">
    <location>
        <position position="191"/>
    </location>
    <ligand>
        <name>alpha-D-glucose 1-phosphate</name>
        <dbReference type="ChEBI" id="CHEBI:58601"/>
    </ligand>
</feature>
<dbReference type="EC" id="2.7.7.27" evidence="1"/>
<dbReference type="EMBL" id="CP000382">
    <property type="protein sequence ID" value="ABK61028.1"/>
    <property type="molecule type" value="Genomic_DNA"/>
</dbReference>
<dbReference type="RefSeq" id="WP_011723167.1">
    <property type="nucleotide sequence ID" value="NC_008593.1"/>
</dbReference>
<dbReference type="SMR" id="A0Q3I7"/>
<dbReference type="STRING" id="386415.NT01CX_0723"/>
<dbReference type="KEGG" id="cno:NT01CX_0723"/>
<dbReference type="eggNOG" id="COG0448">
    <property type="taxonomic scope" value="Bacteria"/>
</dbReference>
<dbReference type="HOGENOM" id="CLU_029499_14_0_9"/>
<dbReference type="UniPathway" id="UPA00164"/>
<dbReference type="Proteomes" id="UP000008220">
    <property type="component" value="Chromosome"/>
</dbReference>
<dbReference type="GO" id="GO:0005524">
    <property type="term" value="F:ATP binding"/>
    <property type="evidence" value="ECO:0007669"/>
    <property type="project" value="UniProtKB-KW"/>
</dbReference>
<dbReference type="GO" id="GO:0008878">
    <property type="term" value="F:glucose-1-phosphate adenylyltransferase activity"/>
    <property type="evidence" value="ECO:0007669"/>
    <property type="project" value="UniProtKB-UniRule"/>
</dbReference>
<dbReference type="GO" id="GO:0005978">
    <property type="term" value="P:glycogen biosynthetic process"/>
    <property type="evidence" value="ECO:0007669"/>
    <property type="project" value="UniProtKB-UniRule"/>
</dbReference>
<dbReference type="CDD" id="cd02508">
    <property type="entry name" value="ADP_Glucose_PP"/>
    <property type="match status" value="1"/>
</dbReference>
<dbReference type="CDD" id="cd04651">
    <property type="entry name" value="LbH_G1P_AT_C"/>
    <property type="match status" value="1"/>
</dbReference>
<dbReference type="Gene3D" id="2.160.10.10">
    <property type="entry name" value="Hexapeptide repeat proteins"/>
    <property type="match status" value="1"/>
</dbReference>
<dbReference type="Gene3D" id="3.90.550.10">
    <property type="entry name" value="Spore Coat Polysaccharide Biosynthesis Protein SpsA, Chain A"/>
    <property type="match status" value="1"/>
</dbReference>
<dbReference type="HAMAP" id="MF_00624">
    <property type="entry name" value="GlgC"/>
    <property type="match status" value="1"/>
</dbReference>
<dbReference type="InterPro" id="IPR011831">
    <property type="entry name" value="ADP-Glc_PPase"/>
</dbReference>
<dbReference type="InterPro" id="IPR005836">
    <property type="entry name" value="ADP_Glu_pyroP_CS"/>
</dbReference>
<dbReference type="InterPro" id="IPR023049">
    <property type="entry name" value="GlgC_bac"/>
</dbReference>
<dbReference type="InterPro" id="IPR056818">
    <property type="entry name" value="GlmU/GlgC-like_hexapep"/>
</dbReference>
<dbReference type="InterPro" id="IPR005835">
    <property type="entry name" value="NTP_transferase_dom"/>
</dbReference>
<dbReference type="InterPro" id="IPR029044">
    <property type="entry name" value="Nucleotide-diphossugar_trans"/>
</dbReference>
<dbReference type="InterPro" id="IPR011004">
    <property type="entry name" value="Trimer_LpxA-like_sf"/>
</dbReference>
<dbReference type="NCBIfam" id="TIGR02091">
    <property type="entry name" value="glgC"/>
    <property type="match status" value="1"/>
</dbReference>
<dbReference type="NCBIfam" id="NF003670">
    <property type="entry name" value="PRK05293.1"/>
    <property type="match status" value="1"/>
</dbReference>
<dbReference type="PANTHER" id="PTHR43523:SF2">
    <property type="entry name" value="GLUCOSE-1-PHOSPHATE ADENYLYLTRANSFERASE"/>
    <property type="match status" value="1"/>
</dbReference>
<dbReference type="PANTHER" id="PTHR43523">
    <property type="entry name" value="GLUCOSE-1-PHOSPHATE ADENYLYLTRANSFERASE-RELATED"/>
    <property type="match status" value="1"/>
</dbReference>
<dbReference type="Pfam" id="PF24894">
    <property type="entry name" value="Hexapep_GlmU"/>
    <property type="match status" value="1"/>
</dbReference>
<dbReference type="Pfam" id="PF00483">
    <property type="entry name" value="NTP_transferase"/>
    <property type="match status" value="1"/>
</dbReference>
<dbReference type="SUPFAM" id="SSF53448">
    <property type="entry name" value="Nucleotide-diphospho-sugar transferases"/>
    <property type="match status" value="1"/>
</dbReference>
<dbReference type="SUPFAM" id="SSF51161">
    <property type="entry name" value="Trimeric LpxA-like enzymes"/>
    <property type="match status" value="1"/>
</dbReference>
<dbReference type="PROSITE" id="PS00808">
    <property type="entry name" value="ADP_GLC_PYROPHOSPH_1"/>
    <property type="match status" value="1"/>
</dbReference>
<dbReference type="PROSITE" id="PS00809">
    <property type="entry name" value="ADP_GLC_PYROPHOSPH_2"/>
    <property type="match status" value="1"/>
</dbReference>
<dbReference type="PROSITE" id="PS00810">
    <property type="entry name" value="ADP_GLC_PYROPHOSPH_3"/>
    <property type="match status" value="1"/>
</dbReference>
<name>GLGC_CLONN</name>
<protein>
    <recommendedName>
        <fullName evidence="1">Glucose-1-phosphate adenylyltransferase</fullName>
        <ecNumber evidence="1">2.7.7.27</ecNumber>
    </recommendedName>
    <alternativeName>
        <fullName evidence="1">ADP-glucose pyrophosphorylase</fullName>
        <shortName evidence="1">ADPGlc PPase</shortName>
    </alternativeName>
    <alternativeName>
        <fullName evidence="1">ADP-glucose synthase</fullName>
    </alternativeName>
</protein>